<comment type="function">
    <text evidence="1">Catalyzes the NADPH-dependent reduction of N-acetyl-5-glutamyl phosphate to yield N-acetyl-L-glutamate 5-semialdehyde.</text>
</comment>
<comment type="catalytic activity">
    <reaction evidence="1">
        <text>N-acetyl-L-glutamate 5-semialdehyde + phosphate + NADP(+) = N-acetyl-L-glutamyl 5-phosphate + NADPH + H(+)</text>
        <dbReference type="Rhea" id="RHEA:21588"/>
        <dbReference type="ChEBI" id="CHEBI:15378"/>
        <dbReference type="ChEBI" id="CHEBI:29123"/>
        <dbReference type="ChEBI" id="CHEBI:43474"/>
        <dbReference type="ChEBI" id="CHEBI:57783"/>
        <dbReference type="ChEBI" id="CHEBI:57936"/>
        <dbReference type="ChEBI" id="CHEBI:58349"/>
        <dbReference type="EC" id="1.2.1.38"/>
    </reaction>
</comment>
<comment type="pathway">
    <text evidence="1">Amino-acid biosynthesis; L-arginine biosynthesis; N(2)-acetyl-L-ornithine from L-glutamate: step 3/4.</text>
</comment>
<comment type="subcellular location">
    <subcellularLocation>
        <location evidence="1">Cytoplasm</location>
    </subcellularLocation>
</comment>
<comment type="similarity">
    <text evidence="1">Belongs to the NAGSA dehydrogenase family. Type 1 subfamily.</text>
</comment>
<dbReference type="EC" id="1.2.1.38" evidence="1"/>
<dbReference type="EMBL" id="CP001056">
    <property type="protein sequence ID" value="ACD25030.1"/>
    <property type="molecule type" value="Genomic_DNA"/>
</dbReference>
<dbReference type="SMR" id="B2TQ25"/>
<dbReference type="KEGG" id="cbk:CLL_A3116"/>
<dbReference type="PATRIC" id="fig|935198.13.peg.3080"/>
<dbReference type="HOGENOM" id="CLU_006384_0_1_9"/>
<dbReference type="UniPathway" id="UPA00068">
    <property type="reaction ID" value="UER00108"/>
</dbReference>
<dbReference type="Proteomes" id="UP000001195">
    <property type="component" value="Chromosome"/>
</dbReference>
<dbReference type="GO" id="GO:0005737">
    <property type="term" value="C:cytoplasm"/>
    <property type="evidence" value="ECO:0007669"/>
    <property type="project" value="UniProtKB-SubCell"/>
</dbReference>
<dbReference type="GO" id="GO:0003942">
    <property type="term" value="F:N-acetyl-gamma-glutamyl-phosphate reductase activity"/>
    <property type="evidence" value="ECO:0007669"/>
    <property type="project" value="UniProtKB-UniRule"/>
</dbReference>
<dbReference type="GO" id="GO:0051287">
    <property type="term" value="F:NAD binding"/>
    <property type="evidence" value="ECO:0007669"/>
    <property type="project" value="InterPro"/>
</dbReference>
<dbReference type="GO" id="GO:0070401">
    <property type="term" value="F:NADP+ binding"/>
    <property type="evidence" value="ECO:0007669"/>
    <property type="project" value="InterPro"/>
</dbReference>
<dbReference type="GO" id="GO:0006526">
    <property type="term" value="P:L-arginine biosynthetic process"/>
    <property type="evidence" value="ECO:0007669"/>
    <property type="project" value="UniProtKB-UniRule"/>
</dbReference>
<dbReference type="CDD" id="cd23934">
    <property type="entry name" value="AGPR_1_C"/>
    <property type="match status" value="1"/>
</dbReference>
<dbReference type="CDD" id="cd17895">
    <property type="entry name" value="AGPR_1_N"/>
    <property type="match status" value="1"/>
</dbReference>
<dbReference type="FunFam" id="3.30.360.10:FF:000014">
    <property type="entry name" value="N-acetyl-gamma-glutamyl-phosphate reductase"/>
    <property type="match status" value="1"/>
</dbReference>
<dbReference type="Gene3D" id="3.30.360.10">
    <property type="entry name" value="Dihydrodipicolinate Reductase, domain 2"/>
    <property type="match status" value="1"/>
</dbReference>
<dbReference type="Gene3D" id="3.40.50.720">
    <property type="entry name" value="NAD(P)-binding Rossmann-like Domain"/>
    <property type="match status" value="1"/>
</dbReference>
<dbReference type="HAMAP" id="MF_00150">
    <property type="entry name" value="ArgC_type1"/>
    <property type="match status" value="1"/>
</dbReference>
<dbReference type="InterPro" id="IPR023013">
    <property type="entry name" value="AGPR_AS"/>
</dbReference>
<dbReference type="InterPro" id="IPR000706">
    <property type="entry name" value="AGPR_type-1"/>
</dbReference>
<dbReference type="InterPro" id="IPR036291">
    <property type="entry name" value="NAD(P)-bd_dom_sf"/>
</dbReference>
<dbReference type="InterPro" id="IPR050085">
    <property type="entry name" value="NAGSA_dehydrogenase"/>
</dbReference>
<dbReference type="InterPro" id="IPR000534">
    <property type="entry name" value="Semialdehyde_DH_NAD-bd"/>
</dbReference>
<dbReference type="NCBIfam" id="TIGR01850">
    <property type="entry name" value="argC"/>
    <property type="match status" value="1"/>
</dbReference>
<dbReference type="PANTHER" id="PTHR32338:SF10">
    <property type="entry name" value="N-ACETYL-GAMMA-GLUTAMYL-PHOSPHATE REDUCTASE, CHLOROPLASTIC-RELATED"/>
    <property type="match status" value="1"/>
</dbReference>
<dbReference type="PANTHER" id="PTHR32338">
    <property type="entry name" value="N-ACETYL-GAMMA-GLUTAMYL-PHOSPHATE REDUCTASE, CHLOROPLASTIC-RELATED-RELATED"/>
    <property type="match status" value="1"/>
</dbReference>
<dbReference type="Pfam" id="PF01118">
    <property type="entry name" value="Semialdhyde_dh"/>
    <property type="match status" value="1"/>
</dbReference>
<dbReference type="Pfam" id="PF22698">
    <property type="entry name" value="Semialdhyde_dhC_1"/>
    <property type="match status" value="1"/>
</dbReference>
<dbReference type="SMART" id="SM00859">
    <property type="entry name" value="Semialdhyde_dh"/>
    <property type="match status" value="1"/>
</dbReference>
<dbReference type="SUPFAM" id="SSF55347">
    <property type="entry name" value="Glyceraldehyde-3-phosphate dehydrogenase-like, C-terminal domain"/>
    <property type="match status" value="1"/>
</dbReference>
<dbReference type="SUPFAM" id="SSF51735">
    <property type="entry name" value="NAD(P)-binding Rossmann-fold domains"/>
    <property type="match status" value="1"/>
</dbReference>
<dbReference type="PROSITE" id="PS01224">
    <property type="entry name" value="ARGC"/>
    <property type="match status" value="1"/>
</dbReference>
<accession>B2TQ25</accession>
<keyword id="KW-0028">Amino-acid biosynthesis</keyword>
<keyword id="KW-0055">Arginine biosynthesis</keyword>
<keyword id="KW-0963">Cytoplasm</keyword>
<keyword id="KW-0521">NADP</keyword>
<keyword id="KW-0560">Oxidoreductase</keyword>
<protein>
    <recommendedName>
        <fullName evidence="1">N-acetyl-gamma-glutamyl-phosphate reductase</fullName>
        <shortName evidence="1">AGPR</shortName>
        <ecNumber evidence="1">1.2.1.38</ecNumber>
    </recommendedName>
    <alternativeName>
        <fullName evidence="1">N-acetyl-glutamate semialdehyde dehydrogenase</fullName>
        <shortName evidence="1">NAGSA dehydrogenase</shortName>
    </alternativeName>
</protein>
<evidence type="ECO:0000255" key="1">
    <source>
        <dbReference type="HAMAP-Rule" id="MF_00150"/>
    </source>
</evidence>
<sequence length="344" mass="38284">MIKVGIIGATGYVGVELLRLLLNHSQIEIGAISSVSFDGQELNNIYKNFLGRTNLICTNMNEVIEKSDVIFTALPHGLSEDIAKKIIENNKICIDMGADFRLSNEEEYKYWYGNNFSQPELHKQSTYGLPELNKEKIKNSSLIANPGCYPTSIELALAPLLKNSLIEPNGIICDSKSGTTGSGRSLSLNTHFPEENENFAPYKIGEHRHTPEIEEILSNIANTKVTVTFTPHLLPINRGIISTIYCTPKEKIGLNSIHKIYTSFYENEQFVKVLPLGEIASIKNVRLSNNCHISFHLNHRKDQIIIISAIDNMIKGAAGQAIQNMNIILGFKENEGLNLISPAF</sequence>
<feature type="chain" id="PRO_1000096720" description="N-acetyl-gamma-glutamyl-phosphate reductase">
    <location>
        <begin position="1"/>
        <end position="344"/>
    </location>
</feature>
<feature type="active site" evidence="1">
    <location>
        <position position="148"/>
    </location>
</feature>
<organism>
    <name type="scientific">Clostridium botulinum (strain Eklund 17B / Type B)</name>
    <dbReference type="NCBI Taxonomy" id="935198"/>
    <lineage>
        <taxon>Bacteria</taxon>
        <taxon>Bacillati</taxon>
        <taxon>Bacillota</taxon>
        <taxon>Clostridia</taxon>
        <taxon>Eubacteriales</taxon>
        <taxon>Clostridiaceae</taxon>
        <taxon>Clostridium</taxon>
    </lineage>
</organism>
<proteinExistence type="inferred from homology"/>
<reference key="1">
    <citation type="submission" date="2008-04" db="EMBL/GenBank/DDBJ databases">
        <title>Complete sequence of Clostridium botulinum strain Eklund.</title>
        <authorList>
            <person name="Brinkac L.M."/>
            <person name="Brown J.L."/>
            <person name="Bruce D."/>
            <person name="Detter C."/>
            <person name="Munk C."/>
            <person name="Smith L.A."/>
            <person name="Smith T.J."/>
            <person name="Sutton G."/>
            <person name="Brettin T.S."/>
        </authorList>
    </citation>
    <scope>NUCLEOTIDE SEQUENCE [LARGE SCALE GENOMIC DNA]</scope>
    <source>
        <strain>Eklund 17B / Type B</strain>
    </source>
</reference>
<name>ARGC_CLOBB</name>
<gene>
    <name evidence="1" type="primary">argC</name>
    <name type="ordered locus">CLL_A3116</name>
</gene>